<feature type="chain" id="PRO_1000079454" description="Small ribosomal subunit protein bS6">
    <location>
        <begin position="1"/>
        <end position="122"/>
    </location>
</feature>
<accession>A9LZQ3</accession>
<gene>
    <name evidence="1" type="primary">rpsF</name>
    <name type="ordered locus">NMCC_1238</name>
</gene>
<comment type="function">
    <text evidence="1">Binds together with bS18 to 16S ribosomal RNA.</text>
</comment>
<comment type="similarity">
    <text evidence="1">Belongs to the bacterial ribosomal protein bS6 family.</text>
</comment>
<evidence type="ECO:0000255" key="1">
    <source>
        <dbReference type="HAMAP-Rule" id="MF_00360"/>
    </source>
</evidence>
<evidence type="ECO:0000305" key="2"/>
<keyword id="KW-0687">Ribonucleoprotein</keyword>
<keyword id="KW-0689">Ribosomal protein</keyword>
<keyword id="KW-0694">RNA-binding</keyword>
<keyword id="KW-0699">rRNA-binding</keyword>
<sequence>MRHYEIVFIVHPDQSEQVPAMVERYKTMIAEANGKIHRLEDWGRRQLAYPINKIHKAHYVLMNIETTPEVVEELETAFRFNDAVLRHLTIKTKHAVTEASPMLGGEKAKNLLSGASEEAVAQ</sequence>
<reference key="1">
    <citation type="journal article" date="2008" name="Genomics">
        <title>Characterization of ST-4821 complex, a unique Neisseria meningitidis clone.</title>
        <authorList>
            <person name="Peng J."/>
            <person name="Yang L."/>
            <person name="Yang F."/>
            <person name="Yang J."/>
            <person name="Yan Y."/>
            <person name="Nie H."/>
            <person name="Zhang X."/>
            <person name="Xiong Z."/>
            <person name="Jiang Y."/>
            <person name="Cheng F."/>
            <person name="Xu X."/>
            <person name="Chen S."/>
            <person name="Sun L."/>
            <person name="Li W."/>
            <person name="Shen Y."/>
            <person name="Shao Z."/>
            <person name="Liang X."/>
            <person name="Xu J."/>
            <person name="Jin Q."/>
        </authorList>
    </citation>
    <scope>NUCLEOTIDE SEQUENCE [LARGE SCALE GENOMIC DNA]</scope>
    <source>
        <strain>053442</strain>
    </source>
</reference>
<protein>
    <recommendedName>
        <fullName evidence="1">Small ribosomal subunit protein bS6</fullName>
    </recommendedName>
    <alternativeName>
        <fullName evidence="2">30S ribosomal protein S6</fullName>
    </alternativeName>
</protein>
<name>RS6_NEIM0</name>
<proteinExistence type="inferred from homology"/>
<organism>
    <name type="scientific">Neisseria meningitidis serogroup C (strain 053442)</name>
    <dbReference type="NCBI Taxonomy" id="374833"/>
    <lineage>
        <taxon>Bacteria</taxon>
        <taxon>Pseudomonadati</taxon>
        <taxon>Pseudomonadota</taxon>
        <taxon>Betaproteobacteria</taxon>
        <taxon>Neisseriales</taxon>
        <taxon>Neisseriaceae</taxon>
        <taxon>Neisseria</taxon>
    </lineage>
</organism>
<dbReference type="EMBL" id="CP000381">
    <property type="protein sequence ID" value="ABX73411.1"/>
    <property type="molecule type" value="Genomic_DNA"/>
</dbReference>
<dbReference type="RefSeq" id="WP_002213302.1">
    <property type="nucleotide sequence ID" value="NC_010120.1"/>
</dbReference>
<dbReference type="SMR" id="A9LZQ3"/>
<dbReference type="GeneID" id="93385877"/>
<dbReference type="KEGG" id="nmn:NMCC_1238"/>
<dbReference type="HOGENOM" id="CLU_113441_6_1_4"/>
<dbReference type="Proteomes" id="UP000001177">
    <property type="component" value="Chromosome"/>
</dbReference>
<dbReference type="GO" id="GO:0022627">
    <property type="term" value="C:cytosolic small ribosomal subunit"/>
    <property type="evidence" value="ECO:0007669"/>
    <property type="project" value="TreeGrafter"/>
</dbReference>
<dbReference type="GO" id="GO:0070181">
    <property type="term" value="F:small ribosomal subunit rRNA binding"/>
    <property type="evidence" value="ECO:0007669"/>
    <property type="project" value="TreeGrafter"/>
</dbReference>
<dbReference type="GO" id="GO:0003735">
    <property type="term" value="F:structural constituent of ribosome"/>
    <property type="evidence" value="ECO:0007669"/>
    <property type="project" value="InterPro"/>
</dbReference>
<dbReference type="GO" id="GO:0006412">
    <property type="term" value="P:translation"/>
    <property type="evidence" value="ECO:0007669"/>
    <property type="project" value="UniProtKB-UniRule"/>
</dbReference>
<dbReference type="CDD" id="cd00473">
    <property type="entry name" value="bS6"/>
    <property type="match status" value="1"/>
</dbReference>
<dbReference type="FunFam" id="3.30.70.60:FF:000003">
    <property type="entry name" value="30S ribosomal protein S6"/>
    <property type="match status" value="1"/>
</dbReference>
<dbReference type="Gene3D" id="3.30.70.60">
    <property type="match status" value="1"/>
</dbReference>
<dbReference type="HAMAP" id="MF_00360">
    <property type="entry name" value="Ribosomal_bS6"/>
    <property type="match status" value="1"/>
</dbReference>
<dbReference type="InterPro" id="IPR000529">
    <property type="entry name" value="Ribosomal_bS6"/>
</dbReference>
<dbReference type="InterPro" id="IPR020815">
    <property type="entry name" value="Ribosomal_bS6_CS"/>
</dbReference>
<dbReference type="InterPro" id="IPR035980">
    <property type="entry name" value="Ribosomal_bS6_sf"/>
</dbReference>
<dbReference type="InterPro" id="IPR020814">
    <property type="entry name" value="Ribosomal_S6_plastid/chlpt"/>
</dbReference>
<dbReference type="InterPro" id="IPR014717">
    <property type="entry name" value="Transl_elong_EF1B/ribsomal_bS6"/>
</dbReference>
<dbReference type="NCBIfam" id="TIGR00166">
    <property type="entry name" value="S6"/>
    <property type="match status" value="1"/>
</dbReference>
<dbReference type="PANTHER" id="PTHR21011">
    <property type="entry name" value="MITOCHONDRIAL 28S RIBOSOMAL PROTEIN S6"/>
    <property type="match status" value="1"/>
</dbReference>
<dbReference type="PANTHER" id="PTHR21011:SF1">
    <property type="entry name" value="SMALL RIBOSOMAL SUBUNIT PROTEIN BS6M"/>
    <property type="match status" value="1"/>
</dbReference>
<dbReference type="Pfam" id="PF01250">
    <property type="entry name" value="Ribosomal_S6"/>
    <property type="match status" value="1"/>
</dbReference>
<dbReference type="SUPFAM" id="SSF54995">
    <property type="entry name" value="Ribosomal protein S6"/>
    <property type="match status" value="1"/>
</dbReference>
<dbReference type="PROSITE" id="PS01048">
    <property type="entry name" value="RIBOSOMAL_S6"/>
    <property type="match status" value="1"/>
</dbReference>